<organism>
    <name type="scientific">Halorhodospira halophila (strain DSM 244 / SL1)</name>
    <name type="common">Ectothiorhodospira halophila (strain DSM 244 / SL1)</name>
    <dbReference type="NCBI Taxonomy" id="349124"/>
    <lineage>
        <taxon>Bacteria</taxon>
        <taxon>Pseudomonadati</taxon>
        <taxon>Pseudomonadota</taxon>
        <taxon>Gammaproteobacteria</taxon>
        <taxon>Chromatiales</taxon>
        <taxon>Ectothiorhodospiraceae</taxon>
        <taxon>Halorhodospira</taxon>
    </lineage>
</organism>
<gene>
    <name evidence="1" type="primary">rlmE</name>
    <name evidence="1" type="synonym">ftsJ</name>
    <name evidence="1" type="synonym">rrmJ</name>
    <name type="ordered locus">Hhal_1771</name>
</gene>
<protein>
    <recommendedName>
        <fullName evidence="1">Ribosomal RNA large subunit methyltransferase E</fullName>
        <ecNumber evidence="1">2.1.1.166</ecNumber>
    </recommendedName>
    <alternativeName>
        <fullName evidence="1">23S rRNA Um2552 methyltransferase</fullName>
    </alternativeName>
    <alternativeName>
        <fullName evidence="1">rRNA (uridine-2'-O-)-methyltransferase</fullName>
    </alternativeName>
</protein>
<evidence type="ECO:0000255" key="1">
    <source>
        <dbReference type="HAMAP-Rule" id="MF_01547"/>
    </source>
</evidence>
<evidence type="ECO:0000256" key="2">
    <source>
        <dbReference type="SAM" id="MobiDB-lite"/>
    </source>
</evidence>
<comment type="function">
    <text evidence="1">Specifically methylates the uridine in position 2552 of 23S rRNA at the 2'-O position of the ribose in the fully assembled 50S ribosomal subunit.</text>
</comment>
<comment type="catalytic activity">
    <reaction evidence="1">
        <text>uridine(2552) in 23S rRNA + S-adenosyl-L-methionine = 2'-O-methyluridine(2552) in 23S rRNA + S-adenosyl-L-homocysteine + H(+)</text>
        <dbReference type="Rhea" id="RHEA:42720"/>
        <dbReference type="Rhea" id="RHEA-COMP:10202"/>
        <dbReference type="Rhea" id="RHEA-COMP:10203"/>
        <dbReference type="ChEBI" id="CHEBI:15378"/>
        <dbReference type="ChEBI" id="CHEBI:57856"/>
        <dbReference type="ChEBI" id="CHEBI:59789"/>
        <dbReference type="ChEBI" id="CHEBI:65315"/>
        <dbReference type="ChEBI" id="CHEBI:74478"/>
        <dbReference type="EC" id="2.1.1.166"/>
    </reaction>
</comment>
<comment type="subcellular location">
    <subcellularLocation>
        <location evidence="1">Cytoplasm</location>
    </subcellularLocation>
</comment>
<comment type="similarity">
    <text evidence="1">Belongs to the class I-like SAM-binding methyltransferase superfamily. RNA methyltransferase RlmE family.</text>
</comment>
<reference key="1">
    <citation type="submission" date="2006-12" db="EMBL/GenBank/DDBJ databases">
        <title>Complete sequence of Halorhodospira halophila SL1.</title>
        <authorList>
            <consortium name="US DOE Joint Genome Institute"/>
            <person name="Copeland A."/>
            <person name="Lucas S."/>
            <person name="Lapidus A."/>
            <person name="Barry K."/>
            <person name="Detter J.C."/>
            <person name="Glavina del Rio T."/>
            <person name="Hammon N."/>
            <person name="Israni S."/>
            <person name="Dalin E."/>
            <person name="Tice H."/>
            <person name="Pitluck S."/>
            <person name="Saunders E."/>
            <person name="Brettin T."/>
            <person name="Bruce D."/>
            <person name="Han C."/>
            <person name="Tapia R."/>
            <person name="Schmutz J."/>
            <person name="Larimer F."/>
            <person name="Land M."/>
            <person name="Hauser L."/>
            <person name="Kyrpides N."/>
            <person name="Mikhailova N."/>
            <person name="Hoff W."/>
            <person name="Richardson P."/>
        </authorList>
    </citation>
    <scope>NUCLEOTIDE SEQUENCE [LARGE SCALE GENOMIC DNA]</scope>
    <source>
        <strain>DSM 244 / SL1</strain>
    </source>
</reference>
<dbReference type="EC" id="2.1.1.166" evidence="1"/>
<dbReference type="EMBL" id="CP000544">
    <property type="protein sequence ID" value="ABM62535.1"/>
    <property type="molecule type" value="Genomic_DNA"/>
</dbReference>
<dbReference type="RefSeq" id="WP_011814557.1">
    <property type="nucleotide sequence ID" value="NC_008789.1"/>
</dbReference>
<dbReference type="SMR" id="A1WXX3"/>
<dbReference type="STRING" id="349124.Hhal_1771"/>
<dbReference type="KEGG" id="hha:Hhal_1771"/>
<dbReference type="eggNOG" id="COG0293">
    <property type="taxonomic scope" value="Bacteria"/>
</dbReference>
<dbReference type="HOGENOM" id="CLU_009422_4_0_6"/>
<dbReference type="OrthoDB" id="9790080at2"/>
<dbReference type="Proteomes" id="UP000000647">
    <property type="component" value="Chromosome"/>
</dbReference>
<dbReference type="GO" id="GO:0005737">
    <property type="term" value="C:cytoplasm"/>
    <property type="evidence" value="ECO:0007669"/>
    <property type="project" value="UniProtKB-SubCell"/>
</dbReference>
<dbReference type="GO" id="GO:0008650">
    <property type="term" value="F:rRNA (uridine-2'-O-)-methyltransferase activity"/>
    <property type="evidence" value="ECO:0007669"/>
    <property type="project" value="UniProtKB-UniRule"/>
</dbReference>
<dbReference type="FunFam" id="3.40.50.150:FF:000005">
    <property type="entry name" value="Ribosomal RNA large subunit methyltransferase E"/>
    <property type="match status" value="1"/>
</dbReference>
<dbReference type="Gene3D" id="3.40.50.150">
    <property type="entry name" value="Vaccinia Virus protein VP39"/>
    <property type="match status" value="1"/>
</dbReference>
<dbReference type="HAMAP" id="MF_01547">
    <property type="entry name" value="RNA_methyltr_E"/>
    <property type="match status" value="1"/>
</dbReference>
<dbReference type="InterPro" id="IPR050082">
    <property type="entry name" value="RNA_methyltr_RlmE"/>
</dbReference>
<dbReference type="InterPro" id="IPR002877">
    <property type="entry name" value="RNA_MeTrfase_FtsJ_dom"/>
</dbReference>
<dbReference type="InterPro" id="IPR015507">
    <property type="entry name" value="rRNA-MeTfrase_E"/>
</dbReference>
<dbReference type="InterPro" id="IPR029063">
    <property type="entry name" value="SAM-dependent_MTases_sf"/>
</dbReference>
<dbReference type="PANTHER" id="PTHR10920">
    <property type="entry name" value="RIBOSOMAL RNA METHYLTRANSFERASE"/>
    <property type="match status" value="1"/>
</dbReference>
<dbReference type="PANTHER" id="PTHR10920:SF18">
    <property type="entry name" value="RRNA METHYLTRANSFERASE 2, MITOCHONDRIAL"/>
    <property type="match status" value="1"/>
</dbReference>
<dbReference type="Pfam" id="PF01728">
    <property type="entry name" value="FtsJ"/>
    <property type="match status" value="1"/>
</dbReference>
<dbReference type="PIRSF" id="PIRSF005461">
    <property type="entry name" value="23S_rRNA_mtase"/>
    <property type="match status" value="1"/>
</dbReference>
<dbReference type="SUPFAM" id="SSF53335">
    <property type="entry name" value="S-adenosyl-L-methionine-dependent methyltransferases"/>
    <property type="match status" value="1"/>
</dbReference>
<name>RLME_HALHL</name>
<proteinExistence type="inferred from homology"/>
<keyword id="KW-0963">Cytoplasm</keyword>
<keyword id="KW-0489">Methyltransferase</keyword>
<keyword id="KW-1185">Reference proteome</keyword>
<keyword id="KW-0698">rRNA processing</keyword>
<keyword id="KW-0949">S-adenosyl-L-methionine</keyword>
<keyword id="KW-0808">Transferase</keyword>
<accession>A1WXX3</accession>
<sequence>MATCRRRRRGCNSQARRSRHESDPFVRRARAEGWRSRAALKLEAIDQRDGLFRPGQVVVDLGAAPGGWSQLVAPKVGSAGRVVAIDLLEMDPLPGVTFLHADFSTDEGLRAVERALEGRPVDIVLSDMAPNLTGHNAVDQPAAMGLAELAADFAGQFLHKNGDFLVKVFHGEGFDAFRGDLTRRFSRVLSRKPDASRSGSREVYLLARGPTV</sequence>
<feature type="chain" id="PRO_0000282753" description="Ribosomal RNA large subunit methyltransferase E">
    <location>
        <begin position="1"/>
        <end position="212"/>
    </location>
</feature>
<feature type="region of interest" description="Disordered" evidence="2">
    <location>
        <begin position="1"/>
        <end position="24"/>
    </location>
</feature>
<feature type="compositionally biased region" description="Basic residues" evidence="2">
    <location>
        <begin position="1"/>
        <end position="10"/>
    </location>
</feature>
<feature type="active site" description="Proton acceptor" evidence="1">
    <location>
        <position position="167"/>
    </location>
</feature>
<feature type="binding site" evidence="1">
    <location>
        <position position="66"/>
    </location>
    <ligand>
        <name>S-adenosyl-L-methionine</name>
        <dbReference type="ChEBI" id="CHEBI:59789"/>
    </ligand>
</feature>
<feature type="binding site" evidence="1">
    <location>
        <position position="68"/>
    </location>
    <ligand>
        <name>S-adenosyl-L-methionine</name>
        <dbReference type="ChEBI" id="CHEBI:59789"/>
    </ligand>
</feature>
<feature type="binding site" evidence="1">
    <location>
        <position position="86"/>
    </location>
    <ligand>
        <name>S-adenosyl-L-methionine</name>
        <dbReference type="ChEBI" id="CHEBI:59789"/>
    </ligand>
</feature>
<feature type="binding site" evidence="1">
    <location>
        <position position="102"/>
    </location>
    <ligand>
        <name>S-adenosyl-L-methionine</name>
        <dbReference type="ChEBI" id="CHEBI:59789"/>
    </ligand>
</feature>
<feature type="binding site" evidence="1">
    <location>
        <position position="127"/>
    </location>
    <ligand>
        <name>S-adenosyl-L-methionine</name>
        <dbReference type="ChEBI" id="CHEBI:59789"/>
    </ligand>
</feature>